<sequence length="615" mass="69817">MATVIHSPRDPNTLSNYNNWVSTHITATFDILFEQKKLVGNVVHKLKSITDARSTEIILDTNHVDIGDVKVDGQASHWELLPPLEPYGAALKINLDQGVGLNEMVEVEISVKTTEKCTALQWLTPAQTSNRKHPYMFSQCQAIHARSIFPCQDTPDVKSTIDFNITSPLPVVASGLPVRGIIEKAQPGSKTLYQFHQKLPIPSYLFALASGDISEAAIGPRSVVATSPDKLSECQWELKADTENFIHAIEKIVYPYAWGEYNVLILPPSFPYGGMENPIFTFATPSIISKDRENVDVIAHELAHSWSGNLVTNASWEHFWLNEGWTTYLERRVSLHGEAYRHFSAIIGWKSLADSVEHFGHDHPFTKLVTDLKGKDPDDAFSSIPYEKGFNFLFHLENLLAKDKFDRFIPHYFTKFKGKSLDSYEFKATMLEFFQHDLEASNLLKNVDWDAWFYAPGLPPKPQFDTSLVDVVYELSSKWKSLPDSSFQPRTSDIEGLTANQIVVLLEQILLFERPLTPELSRVLGEVYSLAKSENIEVSNLYFQVGLRAGDDTVYKPTAELLGKIGRMKFVRPLYRNLQKVNRPLAIETFEKNKDFYHPICRAMVEKDLFGKREE</sequence>
<accession>Q2TZ99</accession>
<gene>
    <name type="ORF">AO090011000940</name>
</gene>
<organism>
    <name type="scientific">Aspergillus oryzae (strain ATCC 42149 / RIB 40)</name>
    <name type="common">Yellow koji mold</name>
    <dbReference type="NCBI Taxonomy" id="510516"/>
    <lineage>
        <taxon>Eukaryota</taxon>
        <taxon>Fungi</taxon>
        <taxon>Dikarya</taxon>
        <taxon>Ascomycota</taxon>
        <taxon>Pezizomycotina</taxon>
        <taxon>Eurotiomycetes</taxon>
        <taxon>Eurotiomycetidae</taxon>
        <taxon>Eurotiales</taxon>
        <taxon>Aspergillaceae</taxon>
        <taxon>Aspergillus</taxon>
        <taxon>Aspergillus subgen. Circumdati</taxon>
    </lineage>
</organism>
<name>LKHA4_ASPOR</name>
<proteinExistence type="inferred from homology"/>
<comment type="function">
    <text evidence="2">Aminopeptidase that preferentially cleaves di- and tripeptides. Also has low epoxide hydrolase activity (in vitro). Can hydrolyze the epoxide leukotriene LTA(4) but it forms preferentially 5,6-dihydroxy-7,9,11,14-eicosatetraenoic acid rather than the cytokine leukotriene B(4) as the product compared to the homologous mammalian enzyme (in vitro).</text>
</comment>
<comment type="catalytic activity">
    <reaction evidence="2">
        <text>an epoxide + H2O = an ethanediol</text>
        <dbReference type="Rhea" id="RHEA:19037"/>
        <dbReference type="ChEBI" id="CHEBI:15377"/>
        <dbReference type="ChEBI" id="CHEBI:32955"/>
        <dbReference type="ChEBI" id="CHEBI:140594"/>
        <dbReference type="EC" id="3.3.2.10"/>
    </reaction>
</comment>
<comment type="cofactor">
    <cofactor evidence="2">
        <name>Zn(2+)</name>
        <dbReference type="ChEBI" id="CHEBI:29105"/>
    </cofactor>
    <text evidence="2">Binds 1 zinc ion per subunit.</text>
</comment>
<comment type="subcellular location">
    <subcellularLocation>
        <location evidence="2">Cytoplasm</location>
    </subcellularLocation>
    <subcellularLocation>
        <location evidence="2">Nucleus</location>
    </subcellularLocation>
</comment>
<comment type="similarity">
    <text evidence="4">Belongs to the peptidase M1 family.</text>
</comment>
<keyword id="KW-0963">Cytoplasm</keyword>
<keyword id="KW-0378">Hydrolase</keyword>
<keyword id="KW-0479">Metal-binding</keyword>
<keyword id="KW-0482">Metalloprotease</keyword>
<keyword id="KW-0539">Nucleus</keyword>
<keyword id="KW-0645">Protease</keyword>
<keyword id="KW-1185">Reference proteome</keyword>
<keyword id="KW-0862">Zinc</keyword>
<reference key="1">
    <citation type="journal article" date="2005" name="Nature">
        <title>Genome sequencing and analysis of Aspergillus oryzae.</title>
        <authorList>
            <person name="Machida M."/>
            <person name="Asai K."/>
            <person name="Sano M."/>
            <person name="Tanaka T."/>
            <person name="Kumagai T."/>
            <person name="Terai G."/>
            <person name="Kusumoto K."/>
            <person name="Arima T."/>
            <person name="Akita O."/>
            <person name="Kashiwagi Y."/>
            <person name="Abe K."/>
            <person name="Gomi K."/>
            <person name="Horiuchi H."/>
            <person name="Kitamoto K."/>
            <person name="Kobayashi T."/>
            <person name="Takeuchi M."/>
            <person name="Denning D.W."/>
            <person name="Galagan J.E."/>
            <person name="Nierman W.C."/>
            <person name="Yu J."/>
            <person name="Archer D.B."/>
            <person name="Bennett J.W."/>
            <person name="Bhatnagar D."/>
            <person name="Cleveland T.E."/>
            <person name="Fedorova N.D."/>
            <person name="Gotoh O."/>
            <person name="Horikawa H."/>
            <person name="Hosoyama A."/>
            <person name="Ichinomiya M."/>
            <person name="Igarashi R."/>
            <person name="Iwashita K."/>
            <person name="Juvvadi P.R."/>
            <person name="Kato M."/>
            <person name="Kato Y."/>
            <person name="Kin T."/>
            <person name="Kokubun A."/>
            <person name="Maeda H."/>
            <person name="Maeyama N."/>
            <person name="Maruyama J."/>
            <person name="Nagasaki H."/>
            <person name="Nakajima T."/>
            <person name="Oda K."/>
            <person name="Okada K."/>
            <person name="Paulsen I."/>
            <person name="Sakamoto K."/>
            <person name="Sawano T."/>
            <person name="Takahashi M."/>
            <person name="Takase K."/>
            <person name="Terabayashi Y."/>
            <person name="Wortman J.R."/>
            <person name="Yamada O."/>
            <person name="Yamagata Y."/>
            <person name="Anazawa H."/>
            <person name="Hata Y."/>
            <person name="Koide Y."/>
            <person name="Komori T."/>
            <person name="Koyama Y."/>
            <person name="Minetoki T."/>
            <person name="Suharnan S."/>
            <person name="Tanaka A."/>
            <person name="Isono K."/>
            <person name="Kuhara S."/>
            <person name="Ogasawara N."/>
            <person name="Kikuchi H."/>
        </authorList>
    </citation>
    <scope>NUCLEOTIDE SEQUENCE [LARGE SCALE GENOMIC DNA]</scope>
    <source>
        <strain>ATCC 42149 / RIB 40</strain>
    </source>
</reference>
<protein>
    <recommendedName>
        <fullName>Leucine aminopeptidase 2</fullName>
        <ecNumber>3.4.11.-</ecNumber>
    </recommendedName>
    <alternativeName>
        <fullName>Epoxide hydrolase</fullName>
        <ecNumber>3.3.2.10</ecNumber>
    </alternativeName>
    <alternativeName>
        <fullName>Leukotriene A-4 hydrolase homolog</fullName>
        <shortName>LTA-4 hydrolase</shortName>
    </alternativeName>
</protein>
<dbReference type="EC" id="3.4.11.-"/>
<dbReference type="EC" id="3.3.2.10"/>
<dbReference type="EMBL" id="BA000055">
    <property type="protein sequence ID" value="BAE65366.1"/>
    <property type="molecule type" value="Genomic_DNA"/>
</dbReference>
<dbReference type="RefSeq" id="XP_023093704.1">
    <property type="nucleotide sequence ID" value="XM_023233174.1"/>
</dbReference>
<dbReference type="SMR" id="Q2TZ99"/>
<dbReference type="STRING" id="510516.Q2TZ99"/>
<dbReference type="MEROPS" id="M01.034"/>
<dbReference type="EnsemblFungi" id="BAE65366">
    <property type="protein sequence ID" value="BAE65366"/>
    <property type="gene ID" value="AO090011000940"/>
</dbReference>
<dbReference type="GeneID" id="5998602"/>
<dbReference type="HOGENOM" id="CLU_014505_1_1_1"/>
<dbReference type="Proteomes" id="UP000006564">
    <property type="component" value="Chromosome 7"/>
</dbReference>
<dbReference type="GO" id="GO:0005829">
    <property type="term" value="C:cytosol"/>
    <property type="evidence" value="ECO:0007669"/>
    <property type="project" value="TreeGrafter"/>
</dbReference>
<dbReference type="GO" id="GO:0000328">
    <property type="term" value="C:fungal-type vacuole lumen"/>
    <property type="evidence" value="ECO:0007669"/>
    <property type="project" value="EnsemblFungi"/>
</dbReference>
<dbReference type="GO" id="GO:0005771">
    <property type="term" value="C:multivesicular body"/>
    <property type="evidence" value="ECO:0007669"/>
    <property type="project" value="EnsemblFungi"/>
</dbReference>
<dbReference type="GO" id="GO:0005634">
    <property type="term" value="C:nucleus"/>
    <property type="evidence" value="ECO:0007669"/>
    <property type="project" value="UniProtKB-SubCell"/>
</dbReference>
<dbReference type="GO" id="GO:0061957">
    <property type="term" value="C:NVT complex"/>
    <property type="evidence" value="ECO:0007669"/>
    <property type="project" value="EnsemblFungi"/>
</dbReference>
<dbReference type="GO" id="GO:0004177">
    <property type="term" value="F:aminopeptidase activity"/>
    <property type="evidence" value="ECO:0000250"/>
    <property type="project" value="UniProtKB"/>
</dbReference>
<dbReference type="GO" id="GO:0004301">
    <property type="term" value="F:epoxide hydrolase activity"/>
    <property type="evidence" value="ECO:0000250"/>
    <property type="project" value="UniProtKB"/>
</dbReference>
<dbReference type="GO" id="GO:0008237">
    <property type="term" value="F:metallopeptidase activity"/>
    <property type="evidence" value="ECO:0007669"/>
    <property type="project" value="UniProtKB-KW"/>
</dbReference>
<dbReference type="GO" id="GO:0008270">
    <property type="term" value="F:zinc ion binding"/>
    <property type="evidence" value="ECO:0000250"/>
    <property type="project" value="UniProtKB"/>
</dbReference>
<dbReference type="GO" id="GO:0120113">
    <property type="term" value="P:cytoplasm to vacuole targeting by the NVT pathway"/>
    <property type="evidence" value="ECO:0007669"/>
    <property type="project" value="EnsemblFungi"/>
</dbReference>
<dbReference type="GO" id="GO:0006629">
    <property type="term" value="P:lipid metabolic process"/>
    <property type="evidence" value="ECO:0007669"/>
    <property type="project" value="EnsemblFungi"/>
</dbReference>
<dbReference type="GO" id="GO:0043171">
    <property type="term" value="P:peptide catabolic process"/>
    <property type="evidence" value="ECO:0000250"/>
    <property type="project" value="UniProtKB"/>
</dbReference>
<dbReference type="GO" id="GO:0030163">
    <property type="term" value="P:protein catabolic process"/>
    <property type="evidence" value="ECO:0007669"/>
    <property type="project" value="EnsemblFungi"/>
</dbReference>
<dbReference type="GO" id="GO:0006508">
    <property type="term" value="P:proteolysis"/>
    <property type="evidence" value="ECO:0007669"/>
    <property type="project" value="UniProtKB-KW"/>
</dbReference>
<dbReference type="CDD" id="cd09599">
    <property type="entry name" value="M1_LTA4H"/>
    <property type="match status" value="1"/>
</dbReference>
<dbReference type="FunFam" id="1.10.390.10:FF:000009">
    <property type="entry name" value="Leukotriene A(4) hydrolase"/>
    <property type="match status" value="1"/>
</dbReference>
<dbReference type="FunFam" id="1.25.40.320:FF:000001">
    <property type="entry name" value="Leukotriene A(4) hydrolase"/>
    <property type="match status" value="1"/>
</dbReference>
<dbReference type="FunFam" id="2.60.40.1730:FF:000004">
    <property type="entry name" value="Leukotriene A(4) hydrolase"/>
    <property type="match status" value="1"/>
</dbReference>
<dbReference type="FunFam" id="3.30.2010.30:FF:000001">
    <property type="entry name" value="Leukotriene A(4) hydrolase"/>
    <property type="match status" value="1"/>
</dbReference>
<dbReference type="Gene3D" id="3.30.2010.30">
    <property type="match status" value="1"/>
</dbReference>
<dbReference type="Gene3D" id="1.10.390.10">
    <property type="entry name" value="Neutral Protease Domain 2"/>
    <property type="match status" value="1"/>
</dbReference>
<dbReference type="Gene3D" id="1.25.40.320">
    <property type="entry name" value="Peptidase M1, leukotriene A4 hydrolase/aminopeptidase C-terminal domain"/>
    <property type="match status" value="1"/>
</dbReference>
<dbReference type="Gene3D" id="2.60.40.1730">
    <property type="entry name" value="tricorn interacting facor f3 domain"/>
    <property type="match status" value="1"/>
</dbReference>
<dbReference type="InterPro" id="IPR045357">
    <property type="entry name" value="Aminopeptidase_N-like_N"/>
</dbReference>
<dbReference type="InterPro" id="IPR042097">
    <property type="entry name" value="Aminopeptidase_N-like_N_sf"/>
</dbReference>
<dbReference type="InterPro" id="IPR016024">
    <property type="entry name" value="ARM-type_fold"/>
</dbReference>
<dbReference type="InterPro" id="IPR012777">
    <property type="entry name" value="LTA4H"/>
</dbReference>
<dbReference type="InterPro" id="IPR049980">
    <property type="entry name" value="LTA4H_cat"/>
</dbReference>
<dbReference type="InterPro" id="IPR038502">
    <property type="entry name" value="M1_LTA-4_hydro/amino_C_sf"/>
</dbReference>
<dbReference type="InterPro" id="IPR034015">
    <property type="entry name" value="M1_LTA4H"/>
</dbReference>
<dbReference type="InterPro" id="IPR001930">
    <property type="entry name" value="Peptidase_M1"/>
</dbReference>
<dbReference type="InterPro" id="IPR015211">
    <property type="entry name" value="Peptidase_M1_C"/>
</dbReference>
<dbReference type="InterPro" id="IPR014782">
    <property type="entry name" value="Peptidase_M1_dom"/>
</dbReference>
<dbReference type="InterPro" id="IPR027268">
    <property type="entry name" value="Peptidase_M4/M1_CTD_sf"/>
</dbReference>
<dbReference type="NCBIfam" id="TIGR02411">
    <property type="entry name" value="leuko_A4_hydro"/>
    <property type="match status" value="1"/>
</dbReference>
<dbReference type="PANTHER" id="PTHR45726">
    <property type="entry name" value="LEUKOTRIENE A-4 HYDROLASE"/>
    <property type="match status" value="1"/>
</dbReference>
<dbReference type="PANTHER" id="PTHR45726:SF3">
    <property type="entry name" value="LEUKOTRIENE A-4 HYDROLASE"/>
    <property type="match status" value="1"/>
</dbReference>
<dbReference type="Pfam" id="PF09127">
    <property type="entry name" value="Leuk-A4-hydro_C"/>
    <property type="match status" value="1"/>
</dbReference>
<dbReference type="Pfam" id="PF01433">
    <property type="entry name" value="Peptidase_M1"/>
    <property type="match status" value="1"/>
</dbReference>
<dbReference type="Pfam" id="PF17900">
    <property type="entry name" value="Peptidase_M1_N"/>
    <property type="match status" value="1"/>
</dbReference>
<dbReference type="PRINTS" id="PR00756">
    <property type="entry name" value="ALADIPTASE"/>
</dbReference>
<dbReference type="SMART" id="SM01263">
    <property type="entry name" value="Leuk-A4-hydro_C"/>
    <property type="match status" value="1"/>
</dbReference>
<dbReference type="SUPFAM" id="SSF48371">
    <property type="entry name" value="ARM repeat"/>
    <property type="match status" value="1"/>
</dbReference>
<dbReference type="SUPFAM" id="SSF63737">
    <property type="entry name" value="Leukotriene A4 hydrolase N-terminal domain"/>
    <property type="match status" value="1"/>
</dbReference>
<dbReference type="SUPFAM" id="SSF55486">
    <property type="entry name" value="Metalloproteases ('zincins'), catalytic domain"/>
    <property type="match status" value="1"/>
</dbReference>
<dbReference type="PROSITE" id="PS00142">
    <property type="entry name" value="ZINC_PROTEASE"/>
    <property type="match status" value="1"/>
</dbReference>
<evidence type="ECO:0000250" key="1">
    <source>
        <dbReference type="UniProtKB" id="P09960"/>
    </source>
</evidence>
<evidence type="ECO:0000250" key="2">
    <source>
        <dbReference type="UniProtKB" id="Q10740"/>
    </source>
</evidence>
<evidence type="ECO:0000255" key="3">
    <source>
        <dbReference type="PROSITE-ProRule" id="PRU10095"/>
    </source>
</evidence>
<evidence type="ECO:0000305" key="4"/>
<feature type="chain" id="PRO_0000324921" description="Leucine aminopeptidase 2">
    <location>
        <begin position="1"/>
        <end position="615"/>
    </location>
</feature>
<feature type="active site" description="Proton acceptor" evidence="3">
    <location>
        <position position="301"/>
    </location>
</feature>
<feature type="active site" description="Proton donor" evidence="3">
    <location>
        <position position="386"/>
    </location>
</feature>
<feature type="binding site" evidence="1">
    <location>
        <begin position="139"/>
        <end position="141"/>
    </location>
    <ligand>
        <name>a peptide</name>
        <dbReference type="ChEBI" id="CHEBI:60466"/>
    </ligand>
</feature>
<feature type="binding site" evidence="1">
    <location>
        <begin position="271"/>
        <end position="276"/>
    </location>
    <ligand>
        <name>a peptide</name>
        <dbReference type="ChEBI" id="CHEBI:60466"/>
    </ligand>
</feature>
<feature type="binding site" evidence="3">
    <location>
        <position position="300"/>
    </location>
    <ligand>
        <name>Zn(2+)</name>
        <dbReference type="ChEBI" id="CHEBI:29105"/>
        <note>catalytic</note>
    </ligand>
</feature>
<feature type="binding site" evidence="3">
    <location>
        <position position="304"/>
    </location>
    <ligand>
        <name>Zn(2+)</name>
        <dbReference type="ChEBI" id="CHEBI:29105"/>
        <note>catalytic</note>
    </ligand>
</feature>
<feature type="binding site" evidence="3">
    <location>
        <position position="323"/>
    </location>
    <ligand>
        <name>Zn(2+)</name>
        <dbReference type="ChEBI" id="CHEBI:29105"/>
        <note>catalytic</note>
    </ligand>
</feature>